<sequence length="121" mass="14012">YGRRRHPKKLTPLAYKQFIPNVAEKTLGASGRYEGKITRNSERFKELTPNYNPDIIFKDEENTVMNHWPGVKLRVTEGWDEDGHHFEESLHYEGRAVDITTSDRDKSKYGTLSRLAVEAGF</sequence>
<name>SHH_DEVMA</name>
<gene>
    <name type="primary">shh</name>
</gene>
<dbReference type="EMBL" id="U51346">
    <property type="protein sequence ID" value="AAB38572.1"/>
    <property type="molecule type" value="Genomic_DNA"/>
</dbReference>
<dbReference type="EMBL" id="U51365">
    <property type="protein sequence ID" value="AAB38590.1"/>
    <property type="molecule type" value="Genomic_DNA"/>
</dbReference>
<dbReference type="SMR" id="O13247"/>
<dbReference type="GO" id="GO:0005615">
    <property type="term" value="C:extracellular space"/>
    <property type="evidence" value="ECO:0007669"/>
    <property type="project" value="TreeGrafter"/>
</dbReference>
<dbReference type="GO" id="GO:0005886">
    <property type="term" value="C:plasma membrane"/>
    <property type="evidence" value="ECO:0007669"/>
    <property type="project" value="UniProtKB-SubCell"/>
</dbReference>
<dbReference type="GO" id="GO:0005509">
    <property type="term" value="F:calcium ion binding"/>
    <property type="evidence" value="ECO:0007669"/>
    <property type="project" value="TreeGrafter"/>
</dbReference>
<dbReference type="GO" id="GO:0005113">
    <property type="term" value="F:patched binding"/>
    <property type="evidence" value="ECO:0007669"/>
    <property type="project" value="TreeGrafter"/>
</dbReference>
<dbReference type="GO" id="GO:0008233">
    <property type="term" value="F:peptidase activity"/>
    <property type="evidence" value="ECO:0007669"/>
    <property type="project" value="UniProtKB-KW"/>
</dbReference>
<dbReference type="GO" id="GO:0048513">
    <property type="term" value="P:animal organ development"/>
    <property type="evidence" value="ECO:0007669"/>
    <property type="project" value="UniProtKB-ARBA"/>
</dbReference>
<dbReference type="GO" id="GO:0048468">
    <property type="term" value="P:cell development"/>
    <property type="evidence" value="ECO:0007669"/>
    <property type="project" value="UniProtKB-ARBA"/>
</dbReference>
<dbReference type="GO" id="GO:0001708">
    <property type="term" value="P:cell fate specification"/>
    <property type="evidence" value="ECO:0007669"/>
    <property type="project" value="TreeGrafter"/>
</dbReference>
<dbReference type="GO" id="GO:0007267">
    <property type="term" value="P:cell-cell signaling"/>
    <property type="evidence" value="ECO:0007669"/>
    <property type="project" value="InterPro"/>
</dbReference>
<dbReference type="GO" id="GO:0007417">
    <property type="term" value="P:central nervous system development"/>
    <property type="evidence" value="ECO:0007669"/>
    <property type="project" value="UniProtKB-ARBA"/>
</dbReference>
<dbReference type="GO" id="GO:0030182">
    <property type="term" value="P:neuron differentiation"/>
    <property type="evidence" value="ECO:0007669"/>
    <property type="project" value="UniProtKB-ARBA"/>
</dbReference>
<dbReference type="GO" id="GO:0006508">
    <property type="term" value="P:proteolysis"/>
    <property type="evidence" value="ECO:0007669"/>
    <property type="project" value="UniProtKB-KW"/>
</dbReference>
<dbReference type="GO" id="GO:0010468">
    <property type="term" value="P:regulation of gene expression"/>
    <property type="evidence" value="ECO:0007669"/>
    <property type="project" value="TreeGrafter"/>
</dbReference>
<dbReference type="GO" id="GO:0007224">
    <property type="term" value="P:smoothened signaling pathway"/>
    <property type="evidence" value="ECO:0007669"/>
    <property type="project" value="TreeGrafter"/>
</dbReference>
<dbReference type="GO" id="GO:0009888">
    <property type="term" value="P:tissue development"/>
    <property type="evidence" value="ECO:0007669"/>
    <property type="project" value="UniProtKB-ARBA"/>
</dbReference>
<dbReference type="Gene3D" id="3.30.1380.10">
    <property type="match status" value="1"/>
</dbReference>
<dbReference type="InterPro" id="IPR001657">
    <property type="entry name" value="Hedgehog"/>
</dbReference>
<dbReference type="InterPro" id="IPR009045">
    <property type="entry name" value="Hedgehog_sig/DD-Pept_Zn-bd_sf"/>
</dbReference>
<dbReference type="InterPro" id="IPR050387">
    <property type="entry name" value="Hedgehog_Signaling"/>
</dbReference>
<dbReference type="InterPro" id="IPR000320">
    <property type="entry name" value="Hedgehog_signalling_dom"/>
</dbReference>
<dbReference type="PANTHER" id="PTHR11889">
    <property type="entry name" value="HEDGEHOG"/>
    <property type="match status" value="1"/>
</dbReference>
<dbReference type="PANTHER" id="PTHR11889:SF36">
    <property type="entry name" value="SONIC HEDGEHOG PROTEIN"/>
    <property type="match status" value="1"/>
</dbReference>
<dbReference type="Pfam" id="PF01085">
    <property type="entry name" value="HH_signal"/>
    <property type="match status" value="1"/>
</dbReference>
<dbReference type="PRINTS" id="PR00632">
    <property type="entry name" value="SONICHHOG"/>
</dbReference>
<dbReference type="SUPFAM" id="SSF55166">
    <property type="entry name" value="Hedgehog/DD-peptidase"/>
    <property type="match status" value="1"/>
</dbReference>
<accession>O13247</accession>
<accession>O13213</accession>
<accession>O13214</accession>
<accession>O13248</accession>
<protein>
    <recommendedName>
        <fullName>Sonic hedgehog protein</fullName>
        <shortName>SHH</shortName>
    </recommendedName>
</protein>
<comment type="function">
    <text evidence="1">Intercellular signal essential for a variety of patterning events during development. Signal produced by the notochord that induces somite patterning, dorso-ventral patterning of the brain and early patterning of the developing eyes. Displays floor plate-inducing activity. Binds to the patched (PTC) receptor, which functions in association with smoothened (SMO), to activate the transcription of target genes. In the absence of SHH, PTC represses the constitutive signaling activity of SMO (By similarity).</text>
</comment>
<comment type="subunit">
    <text evidence="1">N-product is active as a multimer.</text>
</comment>
<comment type="subcellular location">
    <subcellularLocation>
        <location evidence="1">Secreted</location>
    </subcellularLocation>
    <subcellularLocation>
        <location evidence="1">Cell membrane</location>
    </subcellularLocation>
    <text evidence="1">Sonic hedgehog protein C-product: Secreted, extracellular space. Sonic hedgehog protein N-product: Cell membrane; Lipid-anchor. The C-terminal peptide diffuses from the cell, while the N-product either remains associated with lipid rafts at the cell surface, or forms freely diffusible active multimers with its hydrophobic lipid-modified N- and C-termini buried inside.</text>
</comment>
<comment type="domain">
    <text evidence="1">The sonic hedgehog protein N-product binds calcium and zinc ions; this stabilizes the protein fold and is essential for protein-protein interactions mediated by this domain.</text>
</comment>
<comment type="PTM">
    <text>The C-terminal domain displays an autoproteolysis activity and a cholesterol transferase activity. Both activities result in the cleavage of the full-length protein and covalent attachment of a cholesterol moiety to the C-terminal of the newly generated N-terminal fragment (N-product). The N-product is the active species in both local and long-range signaling, whereas the C-product has no signaling activity.</text>
</comment>
<comment type="PTM">
    <text evidence="1">Cholesterylation is required for N-product targeting to lipid rafts and multimerization.</text>
</comment>
<comment type="PTM">
    <text evidence="1">N-palmitoylation is required for N-product multimerization and full activity.</text>
</comment>
<comment type="similarity">
    <text evidence="3">Belongs to the hedgehog family.</text>
</comment>
<organism>
    <name type="scientific">Devario malabaricus</name>
    <name type="common">Malabar danio</name>
    <name type="synonym">Danio malabaricus</name>
    <dbReference type="NCBI Taxonomy" id="46780"/>
    <lineage>
        <taxon>Eukaryota</taxon>
        <taxon>Metazoa</taxon>
        <taxon>Chordata</taxon>
        <taxon>Craniata</taxon>
        <taxon>Vertebrata</taxon>
        <taxon>Euteleostomi</taxon>
        <taxon>Actinopterygii</taxon>
        <taxon>Neopterygii</taxon>
        <taxon>Teleostei</taxon>
        <taxon>Ostariophysi</taxon>
        <taxon>Cypriniformes</taxon>
        <taxon>Danionidae</taxon>
        <taxon>Danioninae</taxon>
        <taxon>Devario</taxon>
    </lineage>
</organism>
<feature type="chain" id="PRO_0000058730" description="Sonic hedgehog protein">
    <location>
        <begin position="1" status="less than"/>
        <end position="121" status="greater than"/>
    </location>
</feature>
<feature type="binding site" evidence="2">
    <location>
        <position position="60"/>
    </location>
    <ligand>
        <name>Ca(2+)</name>
        <dbReference type="ChEBI" id="CHEBI:29108"/>
        <label>1</label>
    </ligand>
</feature>
<feature type="binding site" evidence="2">
    <location>
        <position position="61"/>
    </location>
    <ligand>
        <name>Ca(2+)</name>
        <dbReference type="ChEBI" id="CHEBI:29108"/>
        <label>1</label>
    </ligand>
</feature>
<feature type="binding site" evidence="2">
    <location>
        <position position="61"/>
    </location>
    <ligand>
        <name>Ca(2+)</name>
        <dbReference type="ChEBI" id="CHEBI:29108"/>
        <label>2</label>
    </ligand>
</feature>
<feature type="binding site" evidence="2">
    <location>
        <position position="76"/>
    </location>
    <ligand>
        <name>Ca(2+)</name>
        <dbReference type="ChEBI" id="CHEBI:29108"/>
        <label>1</label>
    </ligand>
</feature>
<feature type="binding site" evidence="2">
    <location>
        <position position="77"/>
    </location>
    <ligand>
        <name>Ca(2+)</name>
        <dbReference type="ChEBI" id="CHEBI:29108"/>
        <label>1</label>
    </ligand>
</feature>
<feature type="binding site" evidence="2">
    <location>
        <position position="77"/>
    </location>
    <ligand>
        <name>Ca(2+)</name>
        <dbReference type="ChEBI" id="CHEBI:29108"/>
        <label>2</label>
    </ligand>
</feature>
<feature type="binding site" evidence="2">
    <location>
        <position position="80"/>
    </location>
    <ligand>
        <name>Ca(2+)</name>
        <dbReference type="ChEBI" id="CHEBI:29108"/>
        <label>2</label>
    </ligand>
</feature>
<feature type="binding site" evidence="2">
    <location>
        <position position="82"/>
    </location>
    <ligand>
        <name>Ca(2+)</name>
        <dbReference type="ChEBI" id="CHEBI:29108"/>
        <label>2</label>
    </ligand>
</feature>
<feature type="binding site" evidence="2">
    <location>
        <position position="91"/>
    </location>
    <ligand>
        <name>Zn(2+)</name>
        <dbReference type="ChEBI" id="CHEBI:29105"/>
    </ligand>
</feature>
<feature type="binding site" evidence="2">
    <location>
        <position position="98"/>
    </location>
    <ligand>
        <name>Zn(2+)</name>
        <dbReference type="ChEBI" id="CHEBI:29105"/>
    </ligand>
</feature>
<feature type="non-consecutive residues" evidence="3">
    <location>
        <begin position="63"/>
        <end position="64"/>
    </location>
</feature>
<feature type="non-terminal residue">
    <location>
        <position position="1"/>
    </location>
</feature>
<feature type="non-terminal residue">
    <location>
        <position position="121"/>
    </location>
</feature>
<proteinExistence type="inferred from homology"/>
<reference key="1">
    <citation type="journal article" date="1996" name="Proc. Natl. Acad. Sci. U.S.A.">
        <title>Evolutionary analyses of hedgehog and Hoxd-10 genes in fish species closely related to the zebrafish.</title>
        <authorList>
            <person name="Zardoya R."/>
            <person name="Abouheif E."/>
            <person name="Meyer A."/>
        </authorList>
    </citation>
    <scope>NUCLEOTIDE SEQUENCE [GENOMIC DNA]</scope>
    <source>
        <tissue>Muscle</tissue>
    </source>
</reference>
<keyword id="KW-0068">Autocatalytic cleavage</keyword>
<keyword id="KW-0106">Calcium</keyword>
<keyword id="KW-1003">Cell membrane</keyword>
<keyword id="KW-0217">Developmental protein</keyword>
<keyword id="KW-0378">Hydrolase</keyword>
<keyword id="KW-0449">Lipoprotein</keyword>
<keyword id="KW-0472">Membrane</keyword>
<keyword id="KW-0479">Metal-binding</keyword>
<keyword id="KW-0564">Palmitate</keyword>
<keyword id="KW-0645">Protease</keyword>
<keyword id="KW-0964">Secreted</keyword>
<keyword id="KW-0862">Zinc</keyword>
<evidence type="ECO:0000250" key="1"/>
<evidence type="ECO:0000250" key="2">
    <source>
        <dbReference type="UniProtKB" id="Q15465"/>
    </source>
</evidence>
<evidence type="ECO:0000305" key="3"/>